<feature type="chain" id="PRO_0000266350" description="Guanylate kinase">
    <location>
        <begin position="1"/>
        <end position="297"/>
    </location>
</feature>
<feature type="domain" description="Guanylate kinase-like">
    <location>
        <begin position="4"/>
        <end position="183"/>
    </location>
</feature>
<feature type="region of interest" description="Unknown">
    <location>
        <begin position="204"/>
        <end position="297"/>
    </location>
</feature>
<feature type="binding site" evidence="1">
    <location>
        <begin position="11"/>
        <end position="18"/>
    </location>
    <ligand>
        <name>ATP</name>
        <dbReference type="ChEBI" id="CHEBI:30616"/>
    </ligand>
</feature>
<dbReference type="EC" id="2.7.4.8"/>
<dbReference type="EMBL" id="CP000123">
    <property type="protein sequence ID" value="ABC01818.1"/>
    <property type="molecule type" value="Genomic_DNA"/>
</dbReference>
<dbReference type="RefSeq" id="WP_011387096.1">
    <property type="nucleotide sequence ID" value="NC_007633.1"/>
</dbReference>
<dbReference type="SMR" id="Q2SSR8"/>
<dbReference type="GeneID" id="93426587"/>
<dbReference type="KEGG" id="mcp:MCAP_0208"/>
<dbReference type="HOGENOM" id="CLU_001715_1_0_14"/>
<dbReference type="PhylomeDB" id="Q2SSR8"/>
<dbReference type="Proteomes" id="UP000001928">
    <property type="component" value="Chromosome"/>
</dbReference>
<dbReference type="GO" id="GO:0005829">
    <property type="term" value="C:cytosol"/>
    <property type="evidence" value="ECO:0007669"/>
    <property type="project" value="TreeGrafter"/>
</dbReference>
<dbReference type="GO" id="GO:0005524">
    <property type="term" value="F:ATP binding"/>
    <property type="evidence" value="ECO:0007669"/>
    <property type="project" value="UniProtKB-UniRule"/>
</dbReference>
<dbReference type="GO" id="GO:0004385">
    <property type="term" value="F:guanylate kinase activity"/>
    <property type="evidence" value="ECO:0007669"/>
    <property type="project" value="UniProtKB-UniRule"/>
</dbReference>
<dbReference type="CDD" id="cd00071">
    <property type="entry name" value="GMPK"/>
    <property type="match status" value="1"/>
</dbReference>
<dbReference type="FunFam" id="3.30.63.10:FF:000002">
    <property type="entry name" value="Guanylate kinase 1"/>
    <property type="match status" value="1"/>
</dbReference>
<dbReference type="Gene3D" id="3.30.63.10">
    <property type="entry name" value="Guanylate Kinase phosphate binding domain"/>
    <property type="match status" value="1"/>
</dbReference>
<dbReference type="Gene3D" id="3.40.50.300">
    <property type="entry name" value="P-loop containing nucleotide triphosphate hydrolases"/>
    <property type="match status" value="1"/>
</dbReference>
<dbReference type="HAMAP" id="MF_00328">
    <property type="entry name" value="Guanylate_kinase"/>
    <property type="match status" value="1"/>
</dbReference>
<dbReference type="InterPro" id="IPR008145">
    <property type="entry name" value="GK/Ca_channel_bsu"/>
</dbReference>
<dbReference type="InterPro" id="IPR008144">
    <property type="entry name" value="Guanylate_kin-like_dom"/>
</dbReference>
<dbReference type="InterPro" id="IPR017665">
    <property type="entry name" value="Guanylate_kinase"/>
</dbReference>
<dbReference type="InterPro" id="IPR020590">
    <property type="entry name" value="Guanylate_kinase_CS"/>
</dbReference>
<dbReference type="InterPro" id="IPR027417">
    <property type="entry name" value="P-loop_NTPase"/>
</dbReference>
<dbReference type="NCBIfam" id="TIGR03263">
    <property type="entry name" value="guanyl_kin"/>
    <property type="match status" value="1"/>
</dbReference>
<dbReference type="PANTHER" id="PTHR23117:SF13">
    <property type="entry name" value="GUANYLATE KINASE"/>
    <property type="match status" value="1"/>
</dbReference>
<dbReference type="PANTHER" id="PTHR23117">
    <property type="entry name" value="GUANYLATE KINASE-RELATED"/>
    <property type="match status" value="1"/>
</dbReference>
<dbReference type="Pfam" id="PF00625">
    <property type="entry name" value="Guanylate_kin"/>
    <property type="match status" value="1"/>
</dbReference>
<dbReference type="SMART" id="SM00072">
    <property type="entry name" value="GuKc"/>
    <property type="match status" value="1"/>
</dbReference>
<dbReference type="SUPFAM" id="SSF52540">
    <property type="entry name" value="P-loop containing nucleoside triphosphate hydrolases"/>
    <property type="match status" value="1"/>
</dbReference>
<dbReference type="PROSITE" id="PS00856">
    <property type="entry name" value="GUANYLATE_KINASE_1"/>
    <property type="match status" value="1"/>
</dbReference>
<dbReference type="PROSITE" id="PS50052">
    <property type="entry name" value="GUANYLATE_KINASE_2"/>
    <property type="match status" value="1"/>
</dbReference>
<reference key="1">
    <citation type="submission" date="2005-09" db="EMBL/GenBank/DDBJ databases">
        <authorList>
            <person name="Glass J.I."/>
            <person name="Lartigue C."/>
            <person name="Pfannkoch C."/>
            <person name="Baden-Tillson H."/>
            <person name="Smith H.O."/>
            <person name="Venter J.C."/>
            <person name="Roske K."/>
            <person name="Wise K.S."/>
            <person name="Calcutt M.J."/>
            <person name="Nelson W.C."/>
            <person name="Nierman W.C."/>
        </authorList>
    </citation>
    <scope>NUCLEOTIDE SEQUENCE [LARGE SCALE GENOMIC DNA]</scope>
    <source>
        <strain>California kid / ATCC 27343 / NCTC 10154</strain>
    </source>
</reference>
<gene>
    <name type="primary">gmk</name>
    <name type="ordered locus">MCAP_0208</name>
</gene>
<sequence length="297" mass="34242">MKKGKMIIISGPSGVGKGSVNGELLQNPDLRLKYSVSMTTRKPRNGEINGVNYFFVSNEEFAKAIVNDELIEYAHFVGNSYGTPRKYVEQELKKGNNVILEIEVDGATQVLNKEANVLSIFLMPPNLTELANRIRGRQTEDEEKIKARLDKALLEIPLKHNYQYVIENDNVANAVAKITDVLHLEGLTDIKTPTVYERLEQIVEQIVKEKYMYFVNNWETNVKLLAKNEEEKNKAKNFDAETYLIKLLTKKVYHKVLGHGDFSKLLDKDFVDFKIQKLMFKINFFSVEQKHYNNDEF</sequence>
<organism>
    <name type="scientific">Mycoplasma capricolum subsp. capricolum (strain California kid / ATCC 27343 / NCTC 10154)</name>
    <dbReference type="NCBI Taxonomy" id="340047"/>
    <lineage>
        <taxon>Bacteria</taxon>
        <taxon>Bacillati</taxon>
        <taxon>Mycoplasmatota</taxon>
        <taxon>Mollicutes</taxon>
        <taxon>Mycoplasmataceae</taxon>
        <taxon>Mycoplasma</taxon>
    </lineage>
</organism>
<name>KGUA_MYCCT</name>
<protein>
    <recommendedName>
        <fullName>Guanylate kinase</fullName>
        <ecNumber>2.7.4.8</ecNumber>
    </recommendedName>
    <alternativeName>
        <fullName>GMP kinase</fullName>
    </alternativeName>
</protein>
<accession>Q2SSR8</accession>
<comment type="function">
    <text evidence="1">Essential for recycling GMP and indirectly, cGMP.</text>
</comment>
<comment type="catalytic activity">
    <reaction>
        <text>GMP + ATP = GDP + ADP</text>
        <dbReference type="Rhea" id="RHEA:20780"/>
        <dbReference type="ChEBI" id="CHEBI:30616"/>
        <dbReference type="ChEBI" id="CHEBI:58115"/>
        <dbReference type="ChEBI" id="CHEBI:58189"/>
        <dbReference type="ChEBI" id="CHEBI:456216"/>
        <dbReference type="EC" id="2.7.4.8"/>
    </reaction>
</comment>
<comment type="subcellular location">
    <subcellularLocation>
        <location evidence="1">Cytoplasm</location>
    </subcellularLocation>
</comment>
<comment type="similarity">
    <text evidence="2">Belongs to the guanylate kinase family.</text>
</comment>
<keyword id="KW-0067">ATP-binding</keyword>
<keyword id="KW-0963">Cytoplasm</keyword>
<keyword id="KW-0418">Kinase</keyword>
<keyword id="KW-0547">Nucleotide-binding</keyword>
<keyword id="KW-0808">Transferase</keyword>
<proteinExistence type="inferred from homology"/>
<evidence type="ECO:0000250" key="1"/>
<evidence type="ECO:0000305" key="2"/>